<name>NU1C_TOBAC</name>
<feature type="chain" id="PRO_0000117516" description="NAD(P)H-quinone oxidoreductase subunit 1, chloroplastic">
    <location>
        <begin position="1"/>
        <end position="367"/>
    </location>
</feature>
<feature type="transmembrane region" description="Helical" evidence="1">
    <location>
        <begin position="30"/>
        <end position="50"/>
    </location>
</feature>
<feature type="transmembrane region" description="Helical" evidence="1">
    <location>
        <begin position="98"/>
        <end position="118"/>
    </location>
</feature>
<feature type="transmembrane region" description="Helical" evidence="1">
    <location>
        <begin position="127"/>
        <end position="147"/>
    </location>
</feature>
<feature type="transmembrane region" description="Helical" evidence="1">
    <location>
        <begin position="164"/>
        <end position="184"/>
    </location>
</feature>
<feature type="transmembrane region" description="Helical" evidence="1">
    <location>
        <begin position="273"/>
        <end position="293"/>
    </location>
</feature>
<feature type="transmembrane region" description="Helical" evidence="1">
    <location>
        <begin position="304"/>
        <end position="324"/>
    </location>
</feature>
<feature type="transmembrane region" description="Helical" evidence="1">
    <location>
        <begin position="340"/>
        <end position="360"/>
    </location>
</feature>
<comment type="function">
    <text evidence="1">NDH shuttles electrons from NAD(P)H:plastoquinone, via FMN and iron-sulfur (Fe-S) centers, to quinones in the photosynthetic chain and possibly in a chloroplast respiratory chain. The immediate electron acceptor for the enzyme in this species is believed to be plastoquinone. Couples the redox reaction to proton translocation, and thus conserves the redox energy in a proton gradient.</text>
</comment>
<comment type="catalytic activity">
    <reaction evidence="1">
        <text>a plastoquinone + NADH + (n+1) H(+)(in) = a plastoquinol + NAD(+) + n H(+)(out)</text>
        <dbReference type="Rhea" id="RHEA:42608"/>
        <dbReference type="Rhea" id="RHEA-COMP:9561"/>
        <dbReference type="Rhea" id="RHEA-COMP:9562"/>
        <dbReference type="ChEBI" id="CHEBI:15378"/>
        <dbReference type="ChEBI" id="CHEBI:17757"/>
        <dbReference type="ChEBI" id="CHEBI:57540"/>
        <dbReference type="ChEBI" id="CHEBI:57945"/>
        <dbReference type="ChEBI" id="CHEBI:62192"/>
    </reaction>
</comment>
<comment type="catalytic activity">
    <reaction evidence="1">
        <text>a plastoquinone + NADPH + (n+1) H(+)(in) = a plastoquinol + NADP(+) + n H(+)(out)</text>
        <dbReference type="Rhea" id="RHEA:42612"/>
        <dbReference type="Rhea" id="RHEA-COMP:9561"/>
        <dbReference type="Rhea" id="RHEA-COMP:9562"/>
        <dbReference type="ChEBI" id="CHEBI:15378"/>
        <dbReference type="ChEBI" id="CHEBI:17757"/>
        <dbReference type="ChEBI" id="CHEBI:57783"/>
        <dbReference type="ChEBI" id="CHEBI:58349"/>
        <dbReference type="ChEBI" id="CHEBI:62192"/>
    </reaction>
</comment>
<comment type="subunit">
    <text evidence="1">NDH is composed of at least 16 different subunits, 5 of which are encoded in the nucleus.</text>
</comment>
<comment type="subcellular location">
    <subcellularLocation>
        <location evidence="1">Plastid</location>
        <location evidence="1">Chloroplast thylakoid membrane</location>
        <topology evidence="1">Multi-pass membrane protein</topology>
    </subcellularLocation>
</comment>
<comment type="similarity">
    <text evidence="1">Belongs to the complex I subunit 1 family.</text>
</comment>
<comment type="sequence caution" evidence="2">
    <conflict type="erroneous gene model prediction">
        <sequence resource="EMBL-CDS" id="CAA77435"/>
    </conflict>
</comment>
<accession>P06254</accession>
<accession>Q32724</accession>
<gene>
    <name evidence="1" type="primary">ndhA</name>
    <name type="synonym">ndh1</name>
</gene>
<geneLocation type="chloroplast"/>
<dbReference type="EC" id="7.1.1.-" evidence="1"/>
<dbReference type="EMBL" id="Z00044">
    <property type="protein sequence ID" value="CAA77435.1"/>
    <property type="status" value="ALT_SEQ"/>
    <property type="molecule type" value="Genomic_DNA"/>
</dbReference>
<dbReference type="PIR" id="A00412">
    <property type="entry name" value="DENTN1"/>
</dbReference>
<dbReference type="RefSeq" id="NP_054562.1">
    <property type="nucleotide sequence ID" value="NC_001879.2"/>
</dbReference>
<dbReference type="SMR" id="P06254"/>
<dbReference type="GeneID" id="800512"/>
<dbReference type="KEGG" id="nta:800512"/>
<dbReference type="OrthoDB" id="1277114at2759"/>
<dbReference type="Proteomes" id="UP000084051">
    <property type="component" value="Unplaced"/>
</dbReference>
<dbReference type="GO" id="GO:0009535">
    <property type="term" value="C:chloroplast thylakoid membrane"/>
    <property type="evidence" value="ECO:0007669"/>
    <property type="project" value="UniProtKB-SubCell"/>
</dbReference>
<dbReference type="GO" id="GO:0016655">
    <property type="term" value="F:oxidoreductase activity, acting on NAD(P)H, quinone or similar compound as acceptor"/>
    <property type="evidence" value="ECO:0007669"/>
    <property type="project" value="UniProtKB-UniRule"/>
</dbReference>
<dbReference type="GO" id="GO:0048038">
    <property type="term" value="F:quinone binding"/>
    <property type="evidence" value="ECO:0007669"/>
    <property type="project" value="UniProtKB-KW"/>
</dbReference>
<dbReference type="GO" id="GO:0019684">
    <property type="term" value="P:photosynthesis, light reaction"/>
    <property type="evidence" value="ECO:0007669"/>
    <property type="project" value="UniProtKB-UniRule"/>
</dbReference>
<dbReference type="HAMAP" id="MF_01350">
    <property type="entry name" value="NDH1_NuoH"/>
    <property type="match status" value="1"/>
</dbReference>
<dbReference type="InterPro" id="IPR001694">
    <property type="entry name" value="NADH_UbQ_OxRdtase_su1/FPO"/>
</dbReference>
<dbReference type="InterPro" id="IPR018086">
    <property type="entry name" value="NADH_UbQ_OxRdtase_su1_CS"/>
</dbReference>
<dbReference type="NCBIfam" id="NF004741">
    <property type="entry name" value="PRK06076.1-2"/>
    <property type="match status" value="1"/>
</dbReference>
<dbReference type="PANTHER" id="PTHR11432">
    <property type="entry name" value="NADH DEHYDROGENASE SUBUNIT 1"/>
    <property type="match status" value="1"/>
</dbReference>
<dbReference type="PANTHER" id="PTHR11432:SF3">
    <property type="entry name" value="NADH-UBIQUINONE OXIDOREDUCTASE CHAIN 1"/>
    <property type="match status" value="1"/>
</dbReference>
<dbReference type="Pfam" id="PF00146">
    <property type="entry name" value="NADHdh"/>
    <property type="match status" value="1"/>
</dbReference>
<dbReference type="PROSITE" id="PS00667">
    <property type="entry name" value="COMPLEX1_ND1_1"/>
    <property type="match status" value="1"/>
</dbReference>
<dbReference type="PROSITE" id="PS00668">
    <property type="entry name" value="COMPLEX1_ND1_2"/>
    <property type="match status" value="1"/>
</dbReference>
<protein>
    <recommendedName>
        <fullName evidence="1">NAD(P)H-quinone oxidoreductase subunit 1, chloroplastic</fullName>
        <ecNumber evidence="1">7.1.1.-</ecNumber>
    </recommendedName>
    <alternativeName>
        <fullName evidence="1">NAD(P)H dehydrogenase subunit 1</fullName>
        <shortName evidence="1">NDH subunit 1</shortName>
    </alternativeName>
    <alternativeName>
        <fullName evidence="1">NADH-plastoquinone oxidoreductase subunit 1</fullName>
    </alternativeName>
</protein>
<proteinExistence type="inferred from homology"/>
<organism>
    <name type="scientific">Nicotiana tabacum</name>
    <name type="common">Common tobacco</name>
    <dbReference type="NCBI Taxonomy" id="4097"/>
    <lineage>
        <taxon>Eukaryota</taxon>
        <taxon>Viridiplantae</taxon>
        <taxon>Streptophyta</taxon>
        <taxon>Embryophyta</taxon>
        <taxon>Tracheophyta</taxon>
        <taxon>Spermatophyta</taxon>
        <taxon>Magnoliopsida</taxon>
        <taxon>eudicotyledons</taxon>
        <taxon>Gunneridae</taxon>
        <taxon>Pentapetalae</taxon>
        <taxon>asterids</taxon>
        <taxon>lamiids</taxon>
        <taxon>Solanales</taxon>
        <taxon>Solanaceae</taxon>
        <taxon>Nicotianoideae</taxon>
        <taxon>Nicotianeae</taxon>
        <taxon>Nicotiana</taxon>
    </lineage>
</organism>
<keyword id="KW-0150">Chloroplast</keyword>
<keyword id="KW-0472">Membrane</keyword>
<keyword id="KW-0520">NAD</keyword>
<keyword id="KW-0521">NADP</keyword>
<keyword id="KW-0934">Plastid</keyword>
<keyword id="KW-0618">Plastoquinone</keyword>
<keyword id="KW-0874">Quinone</keyword>
<keyword id="KW-1185">Reference proteome</keyword>
<keyword id="KW-0793">Thylakoid</keyword>
<keyword id="KW-1278">Translocase</keyword>
<keyword id="KW-0812">Transmembrane</keyword>
<keyword id="KW-1133">Transmembrane helix</keyword>
<evidence type="ECO:0000255" key="1">
    <source>
        <dbReference type="HAMAP-Rule" id="MF_01350"/>
    </source>
</evidence>
<evidence type="ECO:0000305" key="2"/>
<reference key="1">
    <citation type="journal article" date="1986" name="EMBO J.">
        <title>The complete nucleotide sequence of the tobacco chloroplast genome: its gene organization and expression.</title>
        <authorList>
            <person name="Shinozaki K."/>
            <person name="Ohme M."/>
            <person name="Tanaka M."/>
            <person name="Wakasugi T."/>
            <person name="Hayashida N."/>
            <person name="Matsubayashi T."/>
            <person name="Zaita N."/>
            <person name="Chunwongse J."/>
            <person name="Obokata J."/>
            <person name="Yamaguchi-Shinozaki K."/>
            <person name="Ohto C."/>
            <person name="Torazawa K."/>
            <person name="Meng B.-Y."/>
            <person name="Sugita M."/>
            <person name="Deno H."/>
            <person name="Kamogashira T."/>
            <person name="Yamada K."/>
            <person name="Kusuda J."/>
            <person name="Takaiwa F."/>
            <person name="Kato A."/>
            <person name="Tohdoh N."/>
            <person name="Shimada H."/>
            <person name="Sugiura M."/>
        </authorList>
    </citation>
    <scope>NUCLEOTIDE SEQUENCE [LARGE SCALE GENOMIC DNA]</scope>
    <source>
        <strain>cv. Bright Yellow 4</strain>
    </source>
</reference>
<reference key="2">
    <citation type="journal article" date="1993" name="Plant Mol. Biol.">
        <title>Ninety extra nucleotide in ndhF gene of tobacco chloroplast DNA: a summary of revisions to the 1986 genome sequence.</title>
        <authorList>
            <person name="Olmstead R.G."/>
            <person name="Sweere J.A."/>
            <person name="Wolfe K.H."/>
        </authorList>
    </citation>
    <scope>SEQUENCE REVISION</scope>
</reference>
<sequence length="367" mass="40639">MIIDTTEIETINSFSKLESLKEVYGIIWMLFPILTLVLGITIGVLVIVWLEREISAGIQQRIGPEYAGPLGILQALADGTKLLLKENLIPSTGDTRLFSIGPSIAVISIFLSYSVIPFGDHLVLADLSIGVFFWIAISSIAPVGLLMSGYGSNNKYSFLGGLRAAAQSISYEIPLALCVLSISLRVIRLSNSLSTVDIVEAQSKYGFWGWNLWRQPIGFIVFLISSLAECERLPFDLPEAEEELVAGYQTEYSGIKFGLFYIASYLNLLVSSLFVTVLYLGGWNLSIPYIFVPELFGINKRGKVFGTLIGIFITLAKTYLFLFIPIATRWTLPRLRMDQLLNLGWKFLLPISLGNLLLTTSSQLLSL</sequence>